<reference key="1">
    <citation type="journal article" date="2004" name="Genome Res.">
        <title>The status, quality, and expansion of the NIH full-length cDNA project: the Mammalian Gene Collection (MGC).</title>
        <authorList>
            <consortium name="The MGC Project Team"/>
        </authorList>
    </citation>
    <scope>NUCLEOTIDE SEQUENCE [LARGE SCALE MRNA]</scope>
    <source>
        <strain>C57BL/6J</strain>
        <strain>FVB/N</strain>
        <tissue>Kidney</tissue>
        <tissue>Retina</tissue>
    </source>
</reference>
<reference key="2">
    <citation type="journal article" date="2004" name="DNA Res.">
        <title>Prediction of the coding sequences of mouse homologues of KIAA gene: IV. The complete nucleotide sequences of 500 mouse KIAA-homologous cDNAs identified by screening of terminal sequences of cDNA clones randomly sampled from size-fractionated libraries.</title>
        <authorList>
            <person name="Okazaki N."/>
            <person name="Kikuno R."/>
            <person name="Ohara R."/>
            <person name="Inamoto S."/>
            <person name="Koseki H."/>
            <person name="Hiraoka S."/>
            <person name="Saga Y."/>
            <person name="Seino S."/>
            <person name="Nishimura M."/>
            <person name="Kaisho T."/>
            <person name="Hoshino K."/>
            <person name="Kitamura H."/>
            <person name="Nagase T."/>
            <person name="Ohara O."/>
            <person name="Koga H."/>
        </authorList>
    </citation>
    <scope>NUCLEOTIDE SEQUENCE [LARGE SCALE MRNA] OF 256-907</scope>
    <source>
        <tissue>Natural killer cell</tissue>
    </source>
</reference>
<reference key="3">
    <citation type="journal article" date="2007" name="Nature">
        <title>Mutation of FIG4 causes neurodegeneration in the pale tremor mouse and patients with CMT4J.</title>
        <authorList>
            <person name="Chow C.Y."/>
            <person name="Zhang Y."/>
            <person name="Dowling J.J."/>
            <person name="Jin N."/>
            <person name="Adamska M."/>
            <person name="Shiga K."/>
            <person name="Szigeti K."/>
            <person name="Shy M.E."/>
            <person name="Li J."/>
            <person name="Zhang X."/>
            <person name="Lupski J.R."/>
            <person name="Weisman L.S."/>
            <person name="Meisler M.H."/>
        </authorList>
    </citation>
    <scope>FUNCTION</scope>
    <scope>TISSUE SPECIFICITY</scope>
    <scope>DISEASE</scope>
</reference>
<reference key="4">
    <citation type="journal article" date="2008" name="EMBO J.">
        <title>VAC14 nucleates a protein complex essential for the acute interconversion of PI3P and PI(3,5)P(2) in yeast and mouse.</title>
        <authorList>
            <person name="Jin N."/>
            <person name="Chow C.Y."/>
            <person name="Liu L."/>
            <person name="Zolov S.N."/>
            <person name="Bronson R."/>
            <person name="Davisson M."/>
            <person name="Petersen J.L."/>
            <person name="Zhang Y."/>
            <person name="Park S."/>
            <person name="Duex J.E."/>
            <person name="Goldowitz D."/>
            <person name="Meisler M.H."/>
            <person name="Weisman L.S."/>
        </authorList>
    </citation>
    <scope>IDENTIFICATION IN THE PI(3,5)P2 REGULATORY COMPLEX</scope>
    <scope>FUNCTION</scope>
    <scope>SUBCELLULAR LOCATION</scope>
</reference>
<reference key="5">
    <citation type="journal article" date="2010" name="Cell">
        <title>A tissue-specific atlas of mouse protein phosphorylation and expression.</title>
        <authorList>
            <person name="Huttlin E.L."/>
            <person name="Jedrychowski M.P."/>
            <person name="Elias J.E."/>
            <person name="Goswami T."/>
            <person name="Rad R."/>
            <person name="Beausoleil S.A."/>
            <person name="Villen J."/>
            <person name="Haas W."/>
            <person name="Sowa M.E."/>
            <person name="Gygi S.P."/>
        </authorList>
    </citation>
    <scope>IDENTIFICATION BY MASS SPECTROMETRY [LARGE SCALE ANALYSIS]</scope>
    <source>
        <tissue>Liver</tissue>
        <tissue>Spleen</tissue>
        <tissue>Testis</tissue>
    </source>
</reference>
<gene>
    <name type="primary">Fig4</name>
    <name type="synonym">Kiaa0274</name>
    <name type="synonym">Sac3</name>
</gene>
<comment type="function">
    <text evidence="4 5">The PI(3,5)P2 regulatory complex regulates both the synthesis and turnover of phosphatidylinositol 3,5-bisphosphate (PtdIns(3,5)P2). In vitro, hydrolyzes all three D5-phosphorylated polyphosphoinositide substrates in the order PtdIns(4,5)P2 &gt; PtdIns(3,5)P2 &gt; PtdIns(3,4,5)P3. Plays a role in the biogenesis of endosome carrier vesicles (ECV) / multivesicular bodies (MVB) transport intermediates from early endosomes.</text>
</comment>
<comment type="function">
    <text evidence="1 4 5">Dual specificity phosphatase component of the PI(3,5)P2 regulatory complex which regulates both the synthesis and turnover of phosphatidylinositol 3,5-bisphosphate (PtdIns(3,5)P2). Catalyzes the dephosphorylation of phosphatidylinositol 3,5-bisphosphate (PtdIns(3,5)P2) to form phosphatidylinositol 3-phosphate. Has serine-protein phosphatase activity acting on PIKfyve to stimulate its lipid kinase activity, its catalytically activity being required for maximal PI(3,5)P2 production. In vitro, hydrolyzes all three D5-phosphorylated polyphosphoinositide and although displaying preferences for PtdIns(3,5)P2, it is capable of hydrolyzing PtdIns(3,4,5)P3 and PtdIns(4,5)P2, at least in vitro.</text>
</comment>
<comment type="catalytic activity">
    <reaction evidence="1">
        <text>a 1,2-diacyl-sn-glycero-3-phospho-(1D-myo-inositol-3,5-bisphosphate) + H2O = a 1,2-diacyl-sn-glycero-3-phospho-(1D-myo-inositol-3-phosphate) + phosphate</text>
        <dbReference type="Rhea" id="RHEA:32955"/>
        <dbReference type="ChEBI" id="CHEBI:15377"/>
        <dbReference type="ChEBI" id="CHEBI:43474"/>
        <dbReference type="ChEBI" id="CHEBI:57923"/>
        <dbReference type="ChEBI" id="CHEBI:58088"/>
    </reaction>
    <physiologicalReaction direction="left-to-right" evidence="1">
        <dbReference type="Rhea" id="RHEA:32956"/>
    </physiologicalReaction>
</comment>
<comment type="catalytic activity">
    <reaction evidence="1">
        <text>a 1,2-diacyl-sn-glycero-3-phospho-(1D-myo-inositol-4,5-bisphosphate) + H2O = a 1,2-diacyl-sn-glycero-3-phospho-(1D-myo-inositol 4-phosphate) + phosphate</text>
        <dbReference type="Rhea" id="RHEA:22764"/>
        <dbReference type="ChEBI" id="CHEBI:15377"/>
        <dbReference type="ChEBI" id="CHEBI:43474"/>
        <dbReference type="ChEBI" id="CHEBI:58178"/>
        <dbReference type="ChEBI" id="CHEBI:58456"/>
        <dbReference type="EC" id="3.1.3.36"/>
    </reaction>
    <physiologicalReaction direction="left-to-right" evidence="1">
        <dbReference type="Rhea" id="RHEA:22765"/>
    </physiologicalReaction>
</comment>
<comment type="catalytic activity">
    <reaction evidence="1">
        <text>a 1,2-diacyl-sn-glycero-3-phospho-(1D-myo-inositol-3,4,5-trisphosphate) + H2O = a 1,2-diacyl-sn-glycero-3-phospho-(1D-myo-inositol-3,4-bisphosphate) + phosphate</text>
        <dbReference type="Rhea" id="RHEA:25528"/>
        <dbReference type="ChEBI" id="CHEBI:15377"/>
        <dbReference type="ChEBI" id="CHEBI:43474"/>
        <dbReference type="ChEBI" id="CHEBI:57658"/>
        <dbReference type="ChEBI" id="CHEBI:57836"/>
        <dbReference type="EC" id="3.1.3.86"/>
    </reaction>
    <physiologicalReaction direction="left-to-right" evidence="1">
        <dbReference type="Rhea" id="RHEA:25529"/>
    </physiologicalReaction>
</comment>
<comment type="catalytic activity">
    <reaction evidence="1">
        <text>O-phospho-L-seryl-[protein] + H2O = L-seryl-[protein] + phosphate</text>
        <dbReference type="Rhea" id="RHEA:20629"/>
        <dbReference type="Rhea" id="RHEA-COMP:9863"/>
        <dbReference type="Rhea" id="RHEA-COMP:11604"/>
        <dbReference type="ChEBI" id="CHEBI:15377"/>
        <dbReference type="ChEBI" id="CHEBI:29999"/>
        <dbReference type="ChEBI" id="CHEBI:43474"/>
        <dbReference type="ChEBI" id="CHEBI:83421"/>
        <dbReference type="EC" id="3.1.3.16"/>
    </reaction>
    <physiologicalReaction direction="left-to-right" evidence="1">
        <dbReference type="Rhea" id="RHEA:20630"/>
    </physiologicalReaction>
</comment>
<comment type="subunit">
    <text evidence="1 5">Component of the PI(3,5)P2 regulatory complex/PAS complex, at least composed of PIKFYVE, FIG4 and VAC14 (By similarity) (PubMed:19037259). VAC14 nucleates the assembly of the complex and serves as a scaffold by pentamerizing into a star-shaped structure, which can bind a single copy each of PIKFYVE and FIG4 and coordinates their activities (By similarity).</text>
</comment>
<comment type="subcellular location">
    <subcellularLocation>
        <location evidence="5">Endosome membrane</location>
    </subcellularLocation>
    <text evidence="5">Localization requires VAC14 and PIKFYVE.</text>
</comment>
<comment type="tissue specificity">
    <text evidence="4">Wide-spread.</text>
</comment>
<comment type="disease">
    <text evidence="4">Defects in Fig4 are the cause of the pale tremor phenotype which is a multi-organ disorder with neuronal degeneration in the central nervous system, peripheral neuronopathy and diluted pigmentation. At postnatal day three (P3), affected homozygotes have diluted pigmentation and reduced size. Intentional tremor develops during the second week after birth, and abnormal limb postures are evident by the third week. There is impaired motor coordination, muscle weakness and 'swimming' gait. There is progressive loss of mobility, reduction in body weight and juvenile lethality.</text>
</comment>
<organism>
    <name type="scientific">Mus musculus</name>
    <name type="common">Mouse</name>
    <dbReference type="NCBI Taxonomy" id="10090"/>
    <lineage>
        <taxon>Eukaryota</taxon>
        <taxon>Metazoa</taxon>
        <taxon>Chordata</taxon>
        <taxon>Craniata</taxon>
        <taxon>Vertebrata</taxon>
        <taxon>Euteleostomi</taxon>
        <taxon>Mammalia</taxon>
        <taxon>Eutheria</taxon>
        <taxon>Euarchontoglires</taxon>
        <taxon>Glires</taxon>
        <taxon>Rodentia</taxon>
        <taxon>Myomorpha</taxon>
        <taxon>Muroidea</taxon>
        <taxon>Muridae</taxon>
        <taxon>Murinae</taxon>
        <taxon>Mus</taxon>
        <taxon>Mus</taxon>
    </lineage>
</organism>
<name>FIG4_MOUSE</name>
<dbReference type="EC" id="3.1.3.-" evidence="1"/>
<dbReference type="EC" id="3.1.3.36" evidence="1"/>
<dbReference type="EC" id="3.1.3.86" evidence="1"/>
<dbReference type="EC" id="3.1.3.16" evidence="1"/>
<dbReference type="EMBL" id="BC015295">
    <property type="protein sequence ID" value="AAH15295.1"/>
    <property type="molecule type" value="mRNA"/>
</dbReference>
<dbReference type="EMBL" id="BC031887">
    <property type="protein sequence ID" value="AAH31887.1"/>
    <property type="molecule type" value="mRNA"/>
</dbReference>
<dbReference type="EMBL" id="AK172926">
    <property type="protein sequence ID" value="BAD32204.1"/>
    <property type="molecule type" value="mRNA"/>
</dbReference>
<dbReference type="CCDS" id="CCDS23803.1"/>
<dbReference type="RefSeq" id="NP_598760.1">
    <property type="nucleotide sequence ID" value="NM_133999.1"/>
</dbReference>
<dbReference type="SMR" id="Q91WF7"/>
<dbReference type="FunCoup" id="Q91WF7">
    <property type="interactions" value="3438"/>
</dbReference>
<dbReference type="IntAct" id="Q91WF7">
    <property type="interactions" value="1"/>
</dbReference>
<dbReference type="STRING" id="10090.ENSMUSP00000039598"/>
<dbReference type="iPTMnet" id="Q91WF7"/>
<dbReference type="PhosphoSitePlus" id="Q91WF7"/>
<dbReference type="PaxDb" id="10090-ENSMUSP00000039598"/>
<dbReference type="ProteomicsDB" id="270991"/>
<dbReference type="Pumba" id="Q91WF7"/>
<dbReference type="ABCD" id="Q91WF7">
    <property type="antibodies" value="1 sequenced antibody"/>
</dbReference>
<dbReference type="Antibodypedia" id="56156">
    <property type="antibodies" value="238 antibodies from 29 providers"/>
</dbReference>
<dbReference type="DNASU" id="103199"/>
<dbReference type="Ensembl" id="ENSMUST00000043814.5">
    <property type="protein sequence ID" value="ENSMUSP00000039598.4"/>
    <property type="gene ID" value="ENSMUSG00000038417.5"/>
</dbReference>
<dbReference type="GeneID" id="103199"/>
<dbReference type="KEGG" id="mmu:103199"/>
<dbReference type="UCSC" id="uc007exk.1">
    <property type="organism name" value="mouse"/>
</dbReference>
<dbReference type="AGR" id="MGI:2143585"/>
<dbReference type="CTD" id="9896"/>
<dbReference type="MGI" id="MGI:2143585">
    <property type="gene designation" value="Fig4"/>
</dbReference>
<dbReference type="VEuPathDB" id="HostDB:ENSMUSG00000038417"/>
<dbReference type="eggNOG" id="KOG1888">
    <property type="taxonomic scope" value="Eukaryota"/>
</dbReference>
<dbReference type="GeneTree" id="ENSGT00550000074943"/>
<dbReference type="HOGENOM" id="CLU_003016_0_3_1"/>
<dbReference type="InParanoid" id="Q91WF7"/>
<dbReference type="OMA" id="KRKCCAH"/>
<dbReference type="OrthoDB" id="405996at2759"/>
<dbReference type="PhylomeDB" id="Q91WF7"/>
<dbReference type="TreeFam" id="TF105702"/>
<dbReference type="Reactome" id="R-MMU-1660514">
    <property type="pathway name" value="Synthesis of PIPs at the Golgi membrane"/>
</dbReference>
<dbReference type="Reactome" id="R-MMU-1660516">
    <property type="pathway name" value="Synthesis of PIPs at the early endosome membrane"/>
</dbReference>
<dbReference type="Reactome" id="R-MMU-1660517">
    <property type="pathway name" value="Synthesis of PIPs at the late endosome membrane"/>
</dbReference>
<dbReference type="BioGRID-ORCS" id="103199">
    <property type="hits" value="4 hits in 82 CRISPR screens"/>
</dbReference>
<dbReference type="ChiTaRS" id="Fig4">
    <property type="organism name" value="mouse"/>
</dbReference>
<dbReference type="PRO" id="PR:Q91WF7"/>
<dbReference type="Proteomes" id="UP000000589">
    <property type="component" value="Chromosome 10"/>
</dbReference>
<dbReference type="RNAct" id="Q91WF7">
    <property type="molecule type" value="protein"/>
</dbReference>
<dbReference type="Bgee" id="ENSMUSG00000038417">
    <property type="expression patterns" value="Expressed in interventricular septum and 251 other cell types or tissues"/>
</dbReference>
<dbReference type="GO" id="GO:0010008">
    <property type="term" value="C:endosome membrane"/>
    <property type="evidence" value="ECO:0007669"/>
    <property type="project" value="UniProtKB-SubCell"/>
</dbReference>
<dbReference type="GO" id="GO:0005811">
    <property type="term" value="C:lipid droplet"/>
    <property type="evidence" value="ECO:0007669"/>
    <property type="project" value="Ensembl"/>
</dbReference>
<dbReference type="GO" id="GO:0055037">
    <property type="term" value="C:recycling endosome"/>
    <property type="evidence" value="ECO:0007669"/>
    <property type="project" value="Ensembl"/>
</dbReference>
<dbReference type="GO" id="GO:0034485">
    <property type="term" value="F:phosphatidylinositol-3,4,5-trisphosphate 5-phosphatase activity"/>
    <property type="evidence" value="ECO:0007669"/>
    <property type="project" value="RHEA"/>
</dbReference>
<dbReference type="GO" id="GO:0043813">
    <property type="term" value="F:phosphatidylinositol-3,5-bisphosphate 5-phosphatase activity"/>
    <property type="evidence" value="ECO:0007669"/>
    <property type="project" value="InterPro"/>
</dbReference>
<dbReference type="GO" id="GO:0004438">
    <property type="term" value="F:phosphatidylinositol-3-phosphate phosphatase activity"/>
    <property type="evidence" value="ECO:0007669"/>
    <property type="project" value="Ensembl"/>
</dbReference>
<dbReference type="GO" id="GO:0004439">
    <property type="term" value="F:phosphatidylinositol-4,5-bisphosphate 5-phosphatase activity"/>
    <property type="evidence" value="ECO:0007669"/>
    <property type="project" value="RHEA"/>
</dbReference>
<dbReference type="GO" id="GO:0043812">
    <property type="term" value="F:phosphatidylinositol-4-phosphate phosphatase activity"/>
    <property type="evidence" value="ECO:0007669"/>
    <property type="project" value="Ensembl"/>
</dbReference>
<dbReference type="GO" id="GO:0004722">
    <property type="term" value="F:protein serine/threonine phosphatase activity"/>
    <property type="evidence" value="ECO:0007669"/>
    <property type="project" value="RHEA"/>
</dbReference>
<dbReference type="GO" id="GO:0007626">
    <property type="term" value="P:locomotory behavior"/>
    <property type="evidence" value="ECO:0000315"/>
    <property type="project" value="MGI"/>
</dbReference>
<dbReference type="GO" id="GO:0032288">
    <property type="term" value="P:myelin assembly"/>
    <property type="evidence" value="ECO:0000316"/>
    <property type="project" value="MGI"/>
</dbReference>
<dbReference type="GO" id="GO:0042552">
    <property type="term" value="P:myelination"/>
    <property type="evidence" value="ECO:0000315"/>
    <property type="project" value="MGI"/>
</dbReference>
<dbReference type="GO" id="GO:0031642">
    <property type="term" value="P:negative regulation of myelination"/>
    <property type="evidence" value="ECO:0000315"/>
    <property type="project" value="MGI"/>
</dbReference>
<dbReference type="GO" id="GO:0048666">
    <property type="term" value="P:neuron development"/>
    <property type="evidence" value="ECO:0000315"/>
    <property type="project" value="MGI"/>
</dbReference>
<dbReference type="GO" id="GO:0046856">
    <property type="term" value="P:phosphatidylinositol dephosphorylation"/>
    <property type="evidence" value="ECO:0007669"/>
    <property type="project" value="InterPro"/>
</dbReference>
<dbReference type="GO" id="GO:0046488">
    <property type="term" value="P:phosphatidylinositol metabolic process"/>
    <property type="evidence" value="ECO:0000315"/>
    <property type="project" value="MGI"/>
</dbReference>
<dbReference type="GO" id="GO:0043473">
    <property type="term" value="P:pigmentation"/>
    <property type="evidence" value="ECO:0000315"/>
    <property type="project" value="MGI"/>
</dbReference>
<dbReference type="GO" id="GO:0010976">
    <property type="term" value="P:positive regulation of neuron projection development"/>
    <property type="evidence" value="ECO:0007669"/>
    <property type="project" value="Ensembl"/>
</dbReference>
<dbReference type="GO" id="GO:0007033">
    <property type="term" value="P:vacuole organization"/>
    <property type="evidence" value="ECO:0000315"/>
    <property type="project" value="MGI"/>
</dbReference>
<dbReference type="InterPro" id="IPR043573">
    <property type="entry name" value="Fig4-like"/>
</dbReference>
<dbReference type="InterPro" id="IPR002013">
    <property type="entry name" value="SAC_dom"/>
</dbReference>
<dbReference type="PANTHER" id="PTHR45738">
    <property type="entry name" value="POLYPHOSPHOINOSITIDE PHOSPHATASE"/>
    <property type="match status" value="1"/>
</dbReference>
<dbReference type="PANTHER" id="PTHR45738:SF5">
    <property type="entry name" value="POLYPHOSPHOINOSITIDE PHOSPHATASE"/>
    <property type="match status" value="1"/>
</dbReference>
<dbReference type="Pfam" id="PF02383">
    <property type="entry name" value="Syja_N"/>
    <property type="match status" value="1"/>
</dbReference>
<dbReference type="PROSITE" id="PS50275">
    <property type="entry name" value="SAC"/>
    <property type="match status" value="1"/>
</dbReference>
<sequence length="907" mass="103447">MPTAAAPIISSVQKLVLYETRARYFLVGSNHAETKYRVLKIDRTEPKDLVVIDDRHVYTQQEVRELLGRLDLGNRTKMSQKGSSGLFRAVSAFGVVGFVRFLEGYYIVLITKRRKMADIGGHAIYKIEDTSMIYIPNDSVRISHPDEARYLRIFQNVDLSSNFYFSYSYDLSHSLQYNLTVLRMPLEMLKSETSKACQESFDIFEDEGLITQGGSGVFGISSEPYMKYVWNGELLDIIKNTVHRDWLLYIIHGFCGQSKLLIYGRPVYVTLIARRSSRFAGTRFLKRGANCEGDVANEVETEQILCDASVMSFTAGSYSSYVQVRGSVPLFWSQDISTMMPKPPITLDQADPFAHVAALHFDQMLQRFGSPIIILNLVKEREKRKHERILSEELVAAVTYLNQFLPPEHTIVYIPWDMAKYTKSKLCNVLDRLNVIAESVVKKTGFFVNRPDSYCSILRPDEKWNELGGHVIPTGRLQTGILRTNCVDCLDRTNTAQFMVGKCALAYQLYSLGLIDKPNLQFDTDAVRLFEELYEDHGDTLSLQYGGSQLVHRVKTYRKIAPWTQHSKDIMQTLSRYYSNAFSDADRQDSINLFLGVFHPTEGKPHLWELPTDFYLHHKNTMSLLPPRRSYTYWWTPEVVKHLPLPYDEVICAANLKKLMVKKFHRWEEEIDIHNEFFRPYELSSFDDTFCLAMTSSARDFMPKTVGIDPSPFTVRKPDETGKSVLGNKNTREEAVLQRKTAASAPPPPSEEAVSSSSEDDSGTDREDEGSISQRSTPVKMTDTGDSAKATENVVQPMKEVYGVSLSSSLSEEDHSIYARFVQLGQSQHKQDRGNQQLCSRCSDGVIKLTPISAFSQDNIYEVQPPRVDRKSTEIFQAHIQASQGIMQPLGKEDTAMYREYIRNRYL</sequence>
<protein>
    <recommendedName>
        <fullName>Polyphosphoinositide phosphatase</fullName>
        <ecNumber evidence="1">3.1.3.-</ecNumber>
        <ecNumber evidence="1">3.1.3.36</ecNumber>
        <ecNumber evidence="1">3.1.3.86</ecNumber>
    </recommendedName>
    <alternativeName>
        <fullName>Phosphatidylinositol 3,5-bisphosphate 5-phosphatase</fullName>
    </alternativeName>
    <alternativeName>
        <fullName>SAC domain-containing protein 3</fullName>
    </alternativeName>
    <alternativeName>
        <fullName>Serine-protein phosphatase FIG4</fullName>
        <ecNumber evidence="1">3.1.3.16</ecNumber>
    </alternativeName>
</protein>
<accession>Q91WF7</accession>
<accession>Q6A092</accession>
<feature type="chain" id="PRO_0000209744" description="Polyphosphoinositide phosphatase">
    <location>
        <begin position="1"/>
        <end position="907"/>
    </location>
</feature>
<feature type="domain" description="SAC" evidence="2">
    <location>
        <begin position="154"/>
        <end position="547"/>
    </location>
</feature>
<feature type="region of interest" description="Disordered" evidence="3">
    <location>
        <begin position="707"/>
        <end position="790"/>
    </location>
</feature>
<feature type="compositionally biased region" description="Acidic residues" evidence="3">
    <location>
        <begin position="758"/>
        <end position="770"/>
    </location>
</feature>
<evidence type="ECO:0000250" key="1">
    <source>
        <dbReference type="UniProtKB" id="Q92562"/>
    </source>
</evidence>
<evidence type="ECO:0000255" key="2">
    <source>
        <dbReference type="PROSITE-ProRule" id="PRU00183"/>
    </source>
</evidence>
<evidence type="ECO:0000256" key="3">
    <source>
        <dbReference type="SAM" id="MobiDB-lite"/>
    </source>
</evidence>
<evidence type="ECO:0000269" key="4">
    <source>
    </source>
</evidence>
<evidence type="ECO:0000269" key="5">
    <source>
    </source>
</evidence>
<proteinExistence type="evidence at protein level"/>
<keyword id="KW-0967">Endosome</keyword>
<keyword id="KW-0378">Hydrolase</keyword>
<keyword id="KW-0472">Membrane</keyword>
<keyword id="KW-0523">Neurodegeneration</keyword>
<keyword id="KW-0622">Neuropathy</keyword>
<keyword id="KW-1185">Reference proteome</keyword>